<gene>
    <name evidence="1" type="primary">lipB</name>
    <name type="ordered locus">SBO_0494</name>
</gene>
<comment type="function">
    <text evidence="1">Catalyzes the transfer of endogenously produced octanoic acid from octanoyl-acyl-carrier-protein onto the lipoyl domains of lipoate-dependent enzymes. Lipoyl-ACP can also act as a substrate although octanoyl-ACP is likely to be the physiological substrate.</text>
</comment>
<comment type="catalytic activity">
    <reaction evidence="1">
        <text>octanoyl-[ACP] + L-lysyl-[protein] = N(6)-octanoyl-L-lysyl-[protein] + holo-[ACP] + H(+)</text>
        <dbReference type="Rhea" id="RHEA:17665"/>
        <dbReference type="Rhea" id="RHEA-COMP:9636"/>
        <dbReference type="Rhea" id="RHEA-COMP:9685"/>
        <dbReference type="Rhea" id="RHEA-COMP:9752"/>
        <dbReference type="Rhea" id="RHEA-COMP:9928"/>
        <dbReference type="ChEBI" id="CHEBI:15378"/>
        <dbReference type="ChEBI" id="CHEBI:29969"/>
        <dbReference type="ChEBI" id="CHEBI:64479"/>
        <dbReference type="ChEBI" id="CHEBI:78463"/>
        <dbReference type="ChEBI" id="CHEBI:78809"/>
        <dbReference type="EC" id="2.3.1.181"/>
    </reaction>
</comment>
<comment type="pathway">
    <text evidence="1">Protein modification; protein lipoylation via endogenous pathway; protein N(6)-(lipoyl)lysine from octanoyl-[acyl-carrier-protein]: step 1/2.</text>
</comment>
<comment type="subcellular location">
    <subcellularLocation>
        <location evidence="1">Cytoplasm</location>
    </subcellularLocation>
</comment>
<comment type="miscellaneous">
    <text evidence="1">In the reaction, the free carboxyl group of octanoic acid is attached via an amide linkage to the epsilon-amino group of a specific lysine residue of lipoyl domains of lipoate-dependent enzymes.</text>
</comment>
<comment type="similarity">
    <text evidence="1">Belongs to the LipB family.</text>
</comment>
<comment type="sequence caution" evidence="3">
    <conflict type="erroneous initiation">
        <sequence resource="EMBL-CDS" id="ABB65195"/>
    </conflict>
    <text>Truncated N-terminus.</text>
</comment>
<evidence type="ECO:0000255" key="1">
    <source>
        <dbReference type="HAMAP-Rule" id="MF_00013"/>
    </source>
</evidence>
<evidence type="ECO:0000255" key="2">
    <source>
        <dbReference type="PROSITE-ProRule" id="PRU01067"/>
    </source>
</evidence>
<evidence type="ECO:0000305" key="3"/>
<reference key="1">
    <citation type="journal article" date="2005" name="Nucleic Acids Res.">
        <title>Genome dynamics and diversity of Shigella species, the etiologic agents of bacillary dysentery.</title>
        <authorList>
            <person name="Yang F."/>
            <person name="Yang J."/>
            <person name="Zhang X."/>
            <person name="Chen L."/>
            <person name="Jiang Y."/>
            <person name="Yan Y."/>
            <person name="Tang X."/>
            <person name="Wang J."/>
            <person name="Xiong Z."/>
            <person name="Dong J."/>
            <person name="Xue Y."/>
            <person name="Zhu Y."/>
            <person name="Xu X."/>
            <person name="Sun L."/>
            <person name="Chen S."/>
            <person name="Nie H."/>
            <person name="Peng J."/>
            <person name="Xu J."/>
            <person name="Wang Y."/>
            <person name="Yuan Z."/>
            <person name="Wen Y."/>
            <person name="Yao Z."/>
            <person name="Shen Y."/>
            <person name="Qiang B."/>
            <person name="Hou Y."/>
            <person name="Yu J."/>
            <person name="Jin Q."/>
        </authorList>
    </citation>
    <scope>NUCLEOTIDE SEQUENCE [LARGE SCALE GENOMIC DNA]</scope>
    <source>
        <strain>Sb227</strain>
    </source>
</reference>
<feature type="chain" id="PRO_0000242765" description="Octanoyltransferase">
    <location>
        <begin position="1"/>
        <end position="213"/>
    </location>
</feature>
<feature type="domain" description="BPL/LPL catalytic" evidence="2">
    <location>
        <begin position="32"/>
        <end position="207"/>
    </location>
</feature>
<feature type="active site" description="Acyl-thioester intermediate" evidence="1">
    <location>
        <position position="169"/>
    </location>
</feature>
<feature type="binding site" evidence="1">
    <location>
        <begin position="71"/>
        <end position="78"/>
    </location>
    <ligand>
        <name>substrate</name>
    </ligand>
</feature>
<feature type="binding site" evidence="1">
    <location>
        <begin position="138"/>
        <end position="140"/>
    </location>
    <ligand>
        <name>substrate</name>
    </ligand>
</feature>
<feature type="binding site" evidence="1">
    <location>
        <begin position="151"/>
        <end position="153"/>
    </location>
    <ligand>
        <name>substrate</name>
    </ligand>
</feature>
<feature type="site" description="Lowers pKa of active site Cys" evidence="1">
    <location>
        <position position="135"/>
    </location>
</feature>
<name>LIPB_SHIBS</name>
<organism>
    <name type="scientific">Shigella boydii serotype 4 (strain Sb227)</name>
    <dbReference type="NCBI Taxonomy" id="300268"/>
    <lineage>
        <taxon>Bacteria</taxon>
        <taxon>Pseudomonadati</taxon>
        <taxon>Pseudomonadota</taxon>
        <taxon>Gammaproteobacteria</taxon>
        <taxon>Enterobacterales</taxon>
        <taxon>Enterobacteriaceae</taxon>
        <taxon>Shigella</taxon>
    </lineage>
</organism>
<sequence>MYQDKILVRQLGLQPYEPISQAMHEFTDTRDDSTLDEIWLVEHYPVFTQGQAGKAEHILMPGDIPVIQSDRGGQVTYHGPGQQVMYVLLNLKRRKLGVRELVTLLEQTVVNTLAELGIEAHPRADAPGVYVGEKKICSLGLRIRRGCSFHGLALNVNMDLSPFLRINPCGYAGMEMAKISQWKPEATTNNIAPRLLENILALLNNPDFEYITA</sequence>
<proteinExistence type="inferred from homology"/>
<accession>Q324R3</accession>
<dbReference type="EC" id="2.3.1.181" evidence="1"/>
<dbReference type="EMBL" id="CP000036">
    <property type="protein sequence ID" value="ABB65195.1"/>
    <property type="status" value="ALT_INIT"/>
    <property type="molecule type" value="Genomic_DNA"/>
</dbReference>
<dbReference type="RefSeq" id="WP_000284027.1">
    <property type="nucleotide sequence ID" value="NC_007613.1"/>
</dbReference>
<dbReference type="SMR" id="Q324R3"/>
<dbReference type="GeneID" id="93776852"/>
<dbReference type="KEGG" id="sbo:SBO_0494"/>
<dbReference type="HOGENOM" id="CLU_035168_3_1_6"/>
<dbReference type="UniPathway" id="UPA00538">
    <property type="reaction ID" value="UER00592"/>
</dbReference>
<dbReference type="Proteomes" id="UP000007067">
    <property type="component" value="Chromosome"/>
</dbReference>
<dbReference type="GO" id="GO:0005737">
    <property type="term" value="C:cytoplasm"/>
    <property type="evidence" value="ECO:0007669"/>
    <property type="project" value="UniProtKB-SubCell"/>
</dbReference>
<dbReference type="GO" id="GO:0033819">
    <property type="term" value="F:lipoyl(octanoyl) transferase activity"/>
    <property type="evidence" value="ECO:0007669"/>
    <property type="project" value="UniProtKB-EC"/>
</dbReference>
<dbReference type="GO" id="GO:0036211">
    <property type="term" value="P:protein modification process"/>
    <property type="evidence" value="ECO:0007669"/>
    <property type="project" value="InterPro"/>
</dbReference>
<dbReference type="CDD" id="cd16444">
    <property type="entry name" value="LipB"/>
    <property type="match status" value="1"/>
</dbReference>
<dbReference type="FunFam" id="3.30.930.10:FF:000020">
    <property type="entry name" value="Octanoyltransferase"/>
    <property type="match status" value="1"/>
</dbReference>
<dbReference type="Gene3D" id="3.30.930.10">
    <property type="entry name" value="Bira Bifunctional Protein, Domain 2"/>
    <property type="match status" value="1"/>
</dbReference>
<dbReference type="HAMAP" id="MF_00013">
    <property type="entry name" value="LipB"/>
    <property type="match status" value="1"/>
</dbReference>
<dbReference type="InterPro" id="IPR045864">
    <property type="entry name" value="aa-tRNA-synth_II/BPL/LPL"/>
</dbReference>
<dbReference type="InterPro" id="IPR004143">
    <property type="entry name" value="BPL_LPL_catalytic"/>
</dbReference>
<dbReference type="InterPro" id="IPR000544">
    <property type="entry name" value="Octanoyltransferase"/>
</dbReference>
<dbReference type="InterPro" id="IPR020605">
    <property type="entry name" value="Octanoyltransferase_CS"/>
</dbReference>
<dbReference type="NCBIfam" id="TIGR00214">
    <property type="entry name" value="lipB"/>
    <property type="match status" value="1"/>
</dbReference>
<dbReference type="NCBIfam" id="NF010922">
    <property type="entry name" value="PRK14342.1"/>
    <property type="match status" value="1"/>
</dbReference>
<dbReference type="PANTHER" id="PTHR10993:SF7">
    <property type="entry name" value="LIPOYLTRANSFERASE 2, MITOCHONDRIAL-RELATED"/>
    <property type="match status" value="1"/>
</dbReference>
<dbReference type="PANTHER" id="PTHR10993">
    <property type="entry name" value="OCTANOYLTRANSFERASE"/>
    <property type="match status" value="1"/>
</dbReference>
<dbReference type="Pfam" id="PF21948">
    <property type="entry name" value="LplA-B_cat"/>
    <property type="match status" value="1"/>
</dbReference>
<dbReference type="PIRSF" id="PIRSF016262">
    <property type="entry name" value="LPLase"/>
    <property type="match status" value="1"/>
</dbReference>
<dbReference type="SUPFAM" id="SSF55681">
    <property type="entry name" value="Class II aaRS and biotin synthetases"/>
    <property type="match status" value="1"/>
</dbReference>
<dbReference type="PROSITE" id="PS51733">
    <property type="entry name" value="BPL_LPL_CATALYTIC"/>
    <property type="match status" value="1"/>
</dbReference>
<dbReference type="PROSITE" id="PS01313">
    <property type="entry name" value="LIPB"/>
    <property type="match status" value="1"/>
</dbReference>
<protein>
    <recommendedName>
        <fullName evidence="1">Octanoyltransferase</fullName>
        <ecNumber evidence="1">2.3.1.181</ecNumber>
    </recommendedName>
    <alternativeName>
        <fullName evidence="1">Lipoate-protein ligase B</fullName>
    </alternativeName>
    <alternativeName>
        <fullName evidence="1">Lipoyl/octanoyl transferase</fullName>
    </alternativeName>
    <alternativeName>
        <fullName evidence="1">Octanoyl-[acyl-carrier-protein]-protein N-octanoyltransferase</fullName>
    </alternativeName>
</protein>
<keyword id="KW-0012">Acyltransferase</keyword>
<keyword id="KW-0963">Cytoplasm</keyword>
<keyword id="KW-0808">Transferase</keyword>